<dbReference type="EMBL" id="AAFI02000090">
    <property type="protein sequence ID" value="EAL64012.1"/>
    <property type="molecule type" value="Genomic_DNA"/>
</dbReference>
<dbReference type="RefSeq" id="XP_637516.1">
    <property type="nucleotide sequence ID" value="XM_632424.1"/>
</dbReference>
<dbReference type="PaxDb" id="44689-DDB0187145"/>
<dbReference type="EnsemblProtists" id="EAL64012">
    <property type="protein sequence ID" value="EAL64012"/>
    <property type="gene ID" value="DDB_G0286829"/>
</dbReference>
<dbReference type="GeneID" id="8625814"/>
<dbReference type="KEGG" id="ddi:DDB_G0286829"/>
<dbReference type="dictyBase" id="DDB_G0286829"/>
<dbReference type="VEuPathDB" id="AmoebaDB:DDB_G0286829"/>
<dbReference type="eggNOG" id="ENOG502RIQE">
    <property type="taxonomic scope" value="Eukaryota"/>
</dbReference>
<dbReference type="HOGENOM" id="CLU_1411154_0_0_1"/>
<dbReference type="InParanoid" id="Q54L87"/>
<dbReference type="PRO" id="PR:Q54L87"/>
<dbReference type="Proteomes" id="UP000002195">
    <property type="component" value="Chromosome 4"/>
</dbReference>
<dbReference type="GO" id="GO:0016020">
    <property type="term" value="C:membrane"/>
    <property type="evidence" value="ECO:0007669"/>
    <property type="project" value="UniProtKB-SubCell"/>
</dbReference>
<gene>
    <name type="ORF">DDB_G0286829</name>
</gene>
<keyword id="KW-0472">Membrane</keyword>
<keyword id="KW-1185">Reference proteome</keyword>
<keyword id="KW-0812">Transmembrane</keyword>
<keyword id="KW-1133">Transmembrane helix</keyword>
<evidence type="ECO:0000255" key="1"/>
<evidence type="ECO:0000256" key="2">
    <source>
        <dbReference type="SAM" id="MobiDB-lite"/>
    </source>
</evidence>
<evidence type="ECO:0000305" key="3"/>
<reference key="1">
    <citation type="journal article" date="2005" name="Nature">
        <title>The genome of the social amoeba Dictyostelium discoideum.</title>
        <authorList>
            <person name="Eichinger L."/>
            <person name="Pachebat J.A."/>
            <person name="Gloeckner G."/>
            <person name="Rajandream M.A."/>
            <person name="Sucgang R."/>
            <person name="Berriman M."/>
            <person name="Song J."/>
            <person name="Olsen R."/>
            <person name="Szafranski K."/>
            <person name="Xu Q."/>
            <person name="Tunggal B."/>
            <person name="Kummerfeld S."/>
            <person name="Madera M."/>
            <person name="Konfortov B.A."/>
            <person name="Rivero F."/>
            <person name="Bankier A.T."/>
            <person name="Lehmann R."/>
            <person name="Hamlin N."/>
            <person name="Davies R."/>
            <person name="Gaudet P."/>
            <person name="Fey P."/>
            <person name="Pilcher K."/>
            <person name="Chen G."/>
            <person name="Saunders D."/>
            <person name="Sodergren E.J."/>
            <person name="Davis P."/>
            <person name="Kerhornou A."/>
            <person name="Nie X."/>
            <person name="Hall N."/>
            <person name="Anjard C."/>
            <person name="Hemphill L."/>
            <person name="Bason N."/>
            <person name="Farbrother P."/>
            <person name="Desany B."/>
            <person name="Just E."/>
            <person name="Morio T."/>
            <person name="Rost R."/>
            <person name="Churcher C.M."/>
            <person name="Cooper J."/>
            <person name="Haydock S."/>
            <person name="van Driessche N."/>
            <person name="Cronin A."/>
            <person name="Goodhead I."/>
            <person name="Muzny D.M."/>
            <person name="Mourier T."/>
            <person name="Pain A."/>
            <person name="Lu M."/>
            <person name="Harper D."/>
            <person name="Lindsay R."/>
            <person name="Hauser H."/>
            <person name="James K.D."/>
            <person name="Quiles M."/>
            <person name="Madan Babu M."/>
            <person name="Saito T."/>
            <person name="Buchrieser C."/>
            <person name="Wardroper A."/>
            <person name="Felder M."/>
            <person name="Thangavelu M."/>
            <person name="Johnson D."/>
            <person name="Knights A."/>
            <person name="Loulseged H."/>
            <person name="Mungall K.L."/>
            <person name="Oliver K."/>
            <person name="Price C."/>
            <person name="Quail M.A."/>
            <person name="Urushihara H."/>
            <person name="Hernandez J."/>
            <person name="Rabbinowitsch E."/>
            <person name="Steffen D."/>
            <person name="Sanders M."/>
            <person name="Ma J."/>
            <person name="Kohara Y."/>
            <person name="Sharp S."/>
            <person name="Simmonds M.N."/>
            <person name="Spiegler S."/>
            <person name="Tivey A."/>
            <person name="Sugano S."/>
            <person name="White B."/>
            <person name="Walker D."/>
            <person name="Woodward J.R."/>
            <person name="Winckler T."/>
            <person name="Tanaka Y."/>
            <person name="Shaulsky G."/>
            <person name="Schleicher M."/>
            <person name="Weinstock G.M."/>
            <person name="Rosenthal A."/>
            <person name="Cox E.C."/>
            <person name="Chisholm R.L."/>
            <person name="Gibbs R.A."/>
            <person name="Loomis W.F."/>
            <person name="Platzer M."/>
            <person name="Kay R.R."/>
            <person name="Williams J.G."/>
            <person name="Dear P.H."/>
            <person name="Noegel A.A."/>
            <person name="Barrell B.G."/>
            <person name="Kuspa A."/>
        </authorList>
    </citation>
    <scope>NUCLEOTIDE SEQUENCE [LARGE SCALE GENOMIC DNA]</scope>
    <source>
        <strain>AX4</strain>
    </source>
</reference>
<comment type="subcellular location">
    <subcellularLocation>
        <location evidence="3">Membrane</location>
        <topology evidence="3">Single-pass membrane protein</topology>
    </subcellularLocation>
</comment>
<organism>
    <name type="scientific">Dictyostelium discoideum</name>
    <name type="common">Social amoeba</name>
    <dbReference type="NCBI Taxonomy" id="44689"/>
    <lineage>
        <taxon>Eukaryota</taxon>
        <taxon>Amoebozoa</taxon>
        <taxon>Evosea</taxon>
        <taxon>Eumycetozoa</taxon>
        <taxon>Dictyostelia</taxon>
        <taxon>Dictyosteliales</taxon>
        <taxon>Dictyosteliaceae</taxon>
        <taxon>Dictyostelium</taxon>
    </lineage>
</organism>
<feature type="chain" id="PRO_0000347051" description="Putative uncharacterized protein DDB_G0286829">
    <location>
        <begin position="1"/>
        <end position="193"/>
    </location>
</feature>
<feature type="transmembrane region" description="Helical" evidence="1">
    <location>
        <begin position="158"/>
        <end position="180"/>
    </location>
</feature>
<feature type="region of interest" description="Disordered" evidence="2">
    <location>
        <begin position="1"/>
        <end position="144"/>
    </location>
</feature>
<feature type="compositionally biased region" description="Low complexity" evidence="2">
    <location>
        <begin position="29"/>
        <end position="86"/>
    </location>
</feature>
<feature type="compositionally biased region" description="Polar residues" evidence="2">
    <location>
        <begin position="103"/>
        <end position="118"/>
    </location>
</feature>
<feature type="compositionally biased region" description="Low complexity" evidence="2">
    <location>
        <begin position="119"/>
        <end position="140"/>
    </location>
</feature>
<sequence length="193" mass="21643">MEKKRTLSVNSGNNELIPPQPPSSPKTKNSLNNIENNECNNNNNNNNNNNNNNSNSNNLNNSNNNNINTSSNSINSSNSINNSIDNIDNKDNHQQKYYLPPSKMNSSQEFQSYLTPNKNNNNRNNNNRNNNNNNNNNNNNEGTIQNFTSRMLNSIIMYMIRPFLVGASASFGISIGMFYFSPFPPSFLPSSPS</sequence>
<name>Y7145_DICDI</name>
<accession>Q54L87</accession>
<proteinExistence type="predicted"/>
<protein>
    <recommendedName>
        <fullName>Putative uncharacterized protein DDB_G0286829</fullName>
    </recommendedName>
</protein>